<organism>
    <name type="scientific">Escherichia coli O8 (strain IAI1)</name>
    <dbReference type="NCBI Taxonomy" id="585034"/>
    <lineage>
        <taxon>Bacteria</taxon>
        <taxon>Pseudomonadati</taxon>
        <taxon>Pseudomonadota</taxon>
        <taxon>Gammaproteobacteria</taxon>
        <taxon>Enterobacterales</taxon>
        <taxon>Enterobacteriaceae</taxon>
        <taxon>Escherichia</taxon>
    </lineage>
</organism>
<name>HSCA_ECO8A</name>
<sequence length="616" mass="65652">MALLQISEPGLSAAPHQRRLAAGIDLGTTNSLVATVRSGQAETLADHEGRHLLPSVVHYQQQGHSVGYDARTNAALDTANTISSVKRLMGRSLADIQQRYPHLPYQFQASENGLPMIETAAGLLNPVRVSADILKALAARATEALAGELDGVVITVPAYFDDAQRQGTKDAARLAGLHVLRLLNEPTAAAIAYGLDSGQEGVIAVYDLGGGTFDISILRLSRGVFEVLATGGDSALGGDDFDHLLADYIREQAGIPDRSDNRVQRELLDAAIAAKIALSDADSVTVNVAGWQGEISREQFNELIAPLVKRTLLACRRALKDAGVEADEVLEVVMVGGSTRVPLVRERVGEFFGRPPLTSIDPDKVVAIGAAIQADILVGNKPDSEMLLLDVIPLSLGLETMGGLVEKVIPRNTTIPVARAQDFTTFKDGQTAMSIHVMQGERELVQDCRSLARFALRGIPALPAGGAHIRVTFQVDADGLLSVTAMEKSTGVEASIQVKPSYGLTDSEIASMIKDSMSYAEQDVKARMLAEQKVEAARVLESLHGALAADAALLSAAERQVIDDAAAHLSEVAQGDDVDAIEQAIKNVDKQTQDFAARRMDQSVRRALKGHSVDEV</sequence>
<evidence type="ECO:0000255" key="1">
    <source>
        <dbReference type="HAMAP-Rule" id="MF_00679"/>
    </source>
</evidence>
<reference key="1">
    <citation type="journal article" date="2009" name="PLoS Genet.">
        <title>Organised genome dynamics in the Escherichia coli species results in highly diverse adaptive paths.</title>
        <authorList>
            <person name="Touchon M."/>
            <person name="Hoede C."/>
            <person name="Tenaillon O."/>
            <person name="Barbe V."/>
            <person name="Baeriswyl S."/>
            <person name="Bidet P."/>
            <person name="Bingen E."/>
            <person name="Bonacorsi S."/>
            <person name="Bouchier C."/>
            <person name="Bouvet O."/>
            <person name="Calteau A."/>
            <person name="Chiapello H."/>
            <person name="Clermont O."/>
            <person name="Cruveiller S."/>
            <person name="Danchin A."/>
            <person name="Diard M."/>
            <person name="Dossat C."/>
            <person name="Karoui M.E."/>
            <person name="Frapy E."/>
            <person name="Garry L."/>
            <person name="Ghigo J.M."/>
            <person name="Gilles A.M."/>
            <person name="Johnson J."/>
            <person name="Le Bouguenec C."/>
            <person name="Lescat M."/>
            <person name="Mangenot S."/>
            <person name="Martinez-Jehanne V."/>
            <person name="Matic I."/>
            <person name="Nassif X."/>
            <person name="Oztas S."/>
            <person name="Petit M.A."/>
            <person name="Pichon C."/>
            <person name="Rouy Z."/>
            <person name="Ruf C.S."/>
            <person name="Schneider D."/>
            <person name="Tourret J."/>
            <person name="Vacherie B."/>
            <person name="Vallenet D."/>
            <person name="Medigue C."/>
            <person name="Rocha E.P.C."/>
            <person name="Denamur E."/>
        </authorList>
    </citation>
    <scope>NUCLEOTIDE SEQUENCE [LARGE SCALE GENOMIC DNA]</scope>
    <source>
        <strain>IAI1</strain>
    </source>
</reference>
<proteinExistence type="inferred from homology"/>
<gene>
    <name evidence="1" type="primary">hscA</name>
    <name type="ordered locus">ECIAI1_2578</name>
</gene>
<protein>
    <recommendedName>
        <fullName evidence="1">Chaperone protein HscA</fullName>
    </recommendedName>
    <alternativeName>
        <fullName evidence="1">Hsc66</fullName>
    </alternativeName>
</protein>
<accession>B7M7M9</accession>
<comment type="function">
    <text evidence="1">Chaperone involved in the maturation of iron-sulfur cluster-containing proteins. Has a low intrinsic ATPase activity which is markedly stimulated by HscB. Involved in the maturation of IscU.</text>
</comment>
<comment type="similarity">
    <text evidence="1">Belongs to the heat shock protein 70 family.</text>
</comment>
<dbReference type="EMBL" id="CU928160">
    <property type="protein sequence ID" value="CAQ99417.1"/>
    <property type="molecule type" value="Genomic_DNA"/>
</dbReference>
<dbReference type="RefSeq" id="WP_001196613.1">
    <property type="nucleotide sequence ID" value="NC_011741.1"/>
</dbReference>
<dbReference type="SMR" id="B7M7M9"/>
<dbReference type="GeneID" id="93774610"/>
<dbReference type="KEGG" id="ecr:ECIAI1_2578"/>
<dbReference type="HOGENOM" id="CLU_005965_2_1_6"/>
<dbReference type="GO" id="GO:0005524">
    <property type="term" value="F:ATP binding"/>
    <property type="evidence" value="ECO:0007669"/>
    <property type="project" value="UniProtKB-KW"/>
</dbReference>
<dbReference type="GO" id="GO:0016887">
    <property type="term" value="F:ATP hydrolysis activity"/>
    <property type="evidence" value="ECO:0007669"/>
    <property type="project" value="UniProtKB-UniRule"/>
</dbReference>
<dbReference type="GO" id="GO:0140662">
    <property type="term" value="F:ATP-dependent protein folding chaperone"/>
    <property type="evidence" value="ECO:0007669"/>
    <property type="project" value="InterPro"/>
</dbReference>
<dbReference type="GO" id="GO:0051082">
    <property type="term" value="F:unfolded protein binding"/>
    <property type="evidence" value="ECO:0007669"/>
    <property type="project" value="InterPro"/>
</dbReference>
<dbReference type="GO" id="GO:0016226">
    <property type="term" value="P:iron-sulfur cluster assembly"/>
    <property type="evidence" value="ECO:0007669"/>
    <property type="project" value="InterPro"/>
</dbReference>
<dbReference type="CDD" id="cd10236">
    <property type="entry name" value="ASKHA_NBD_HSP70_HscA"/>
    <property type="match status" value="1"/>
</dbReference>
<dbReference type="FunFam" id="1.20.1270.10:FF:000006">
    <property type="entry name" value="Chaperone protein HscA"/>
    <property type="match status" value="1"/>
</dbReference>
<dbReference type="FunFam" id="3.30.420.40:FF:000046">
    <property type="entry name" value="Chaperone protein HscA"/>
    <property type="match status" value="1"/>
</dbReference>
<dbReference type="FunFam" id="3.90.640.10:FF:000013">
    <property type="entry name" value="Chaperone protein HscA"/>
    <property type="match status" value="1"/>
</dbReference>
<dbReference type="FunFam" id="2.60.34.10:FF:000005">
    <property type="entry name" value="Chaperone protein HscA homolog"/>
    <property type="match status" value="1"/>
</dbReference>
<dbReference type="FunFam" id="3.30.420.40:FF:000020">
    <property type="entry name" value="Chaperone protein HscA homolog"/>
    <property type="match status" value="1"/>
</dbReference>
<dbReference type="Gene3D" id="1.20.1270.10">
    <property type="match status" value="1"/>
</dbReference>
<dbReference type="Gene3D" id="3.30.420.40">
    <property type="match status" value="2"/>
</dbReference>
<dbReference type="Gene3D" id="3.90.640.10">
    <property type="entry name" value="Actin, Chain A, domain 4"/>
    <property type="match status" value="1"/>
</dbReference>
<dbReference type="Gene3D" id="2.60.34.10">
    <property type="entry name" value="Substrate Binding Domain Of DNAk, Chain A, domain 1"/>
    <property type="match status" value="1"/>
</dbReference>
<dbReference type="HAMAP" id="MF_00679">
    <property type="entry name" value="HscA"/>
    <property type="match status" value="1"/>
</dbReference>
<dbReference type="InterPro" id="IPR043129">
    <property type="entry name" value="ATPase_NBD"/>
</dbReference>
<dbReference type="InterPro" id="IPR018181">
    <property type="entry name" value="Heat_shock_70_CS"/>
</dbReference>
<dbReference type="InterPro" id="IPR042039">
    <property type="entry name" value="HscA_NBD"/>
</dbReference>
<dbReference type="InterPro" id="IPR029048">
    <property type="entry name" value="HSP70_C_sf"/>
</dbReference>
<dbReference type="InterPro" id="IPR029047">
    <property type="entry name" value="HSP70_peptide-bd_sf"/>
</dbReference>
<dbReference type="InterPro" id="IPR013126">
    <property type="entry name" value="Hsp_70_fam"/>
</dbReference>
<dbReference type="InterPro" id="IPR010236">
    <property type="entry name" value="ISC_FeS_clus_asmbl_HscA"/>
</dbReference>
<dbReference type="NCBIfam" id="TIGR01991">
    <property type="entry name" value="HscA"/>
    <property type="match status" value="1"/>
</dbReference>
<dbReference type="NCBIfam" id="NF003520">
    <property type="entry name" value="PRK05183.1"/>
    <property type="match status" value="1"/>
</dbReference>
<dbReference type="PANTHER" id="PTHR19375">
    <property type="entry name" value="HEAT SHOCK PROTEIN 70KDA"/>
    <property type="match status" value="1"/>
</dbReference>
<dbReference type="Pfam" id="PF00012">
    <property type="entry name" value="HSP70"/>
    <property type="match status" value="1"/>
</dbReference>
<dbReference type="PRINTS" id="PR00301">
    <property type="entry name" value="HEATSHOCK70"/>
</dbReference>
<dbReference type="SUPFAM" id="SSF53067">
    <property type="entry name" value="Actin-like ATPase domain"/>
    <property type="match status" value="2"/>
</dbReference>
<dbReference type="SUPFAM" id="SSF100934">
    <property type="entry name" value="Heat shock protein 70kD (HSP70), C-terminal subdomain"/>
    <property type="match status" value="1"/>
</dbReference>
<dbReference type="SUPFAM" id="SSF100920">
    <property type="entry name" value="Heat shock protein 70kD (HSP70), peptide-binding domain"/>
    <property type="match status" value="1"/>
</dbReference>
<dbReference type="PROSITE" id="PS00297">
    <property type="entry name" value="HSP70_1"/>
    <property type="match status" value="1"/>
</dbReference>
<dbReference type="PROSITE" id="PS00329">
    <property type="entry name" value="HSP70_2"/>
    <property type="match status" value="1"/>
</dbReference>
<dbReference type="PROSITE" id="PS01036">
    <property type="entry name" value="HSP70_3"/>
    <property type="match status" value="1"/>
</dbReference>
<keyword id="KW-0067">ATP-binding</keyword>
<keyword id="KW-0143">Chaperone</keyword>
<keyword id="KW-0547">Nucleotide-binding</keyword>
<feature type="chain" id="PRO_1000131675" description="Chaperone protein HscA">
    <location>
        <begin position="1"/>
        <end position="616"/>
    </location>
</feature>